<organism>
    <name type="scientific">Ovis aries</name>
    <name type="common">Sheep</name>
    <dbReference type="NCBI Taxonomy" id="9940"/>
    <lineage>
        <taxon>Eukaryota</taxon>
        <taxon>Metazoa</taxon>
        <taxon>Chordata</taxon>
        <taxon>Craniata</taxon>
        <taxon>Vertebrata</taxon>
        <taxon>Euteleostomi</taxon>
        <taxon>Mammalia</taxon>
        <taxon>Eutheria</taxon>
        <taxon>Laurasiatheria</taxon>
        <taxon>Artiodactyla</taxon>
        <taxon>Ruminantia</taxon>
        <taxon>Pecora</taxon>
        <taxon>Bovidae</taxon>
        <taxon>Caprinae</taxon>
        <taxon>Ovis</taxon>
    </lineage>
</organism>
<protein>
    <recommendedName>
        <fullName>Keratin, high-sulfur matrix protein, IIIA3</fullName>
    </recommendedName>
</protein>
<proteinExistence type="evidence at protein level"/>
<feature type="chain" id="PRO_0000084322" description="Keratin, high-sulfur matrix protein, IIIA3">
    <location>
        <begin position="1"/>
        <end position="131"/>
    </location>
</feature>
<comment type="function">
    <text>The keratin products of mammalian epidermal derivatives such as wool and hair consist of microfibrils embedded in a rigid matrix of other proteins. The matrix proteins include the high-sulfur and high-tyrosine keratins, having molecular weights of 6-20 kDa, whereas the microfibrils contain the larger, low-sulfur keratins (40-56 kDa).</text>
</comment>
<comment type="tissue specificity">
    <text>Wool.</text>
</comment>
<keyword id="KW-0903">Direct protein sequencing</keyword>
<keyword id="KW-0416">Keratin</keyword>
<keyword id="KW-1185">Reference proteome</keyword>
<reference key="1">
    <citation type="journal article" date="1973" name="Biochem. J.">
        <title>Studies on the high-sulphur proteins of reduced merino wool. Amino acid sequence of protein SCMKB-3A3.</title>
        <authorList>
            <person name="Swart L.S."/>
            <person name="Haylett T."/>
        </authorList>
    </citation>
    <scope>PROTEIN SEQUENCE</scope>
    <source>
        <strain>Merino</strain>
    </source>
</reference>
<dbReference type="PIR" id="A02840">
    <property type="entry name" value="KRSHA3"/>
</dbReference>
<dbReference type="Proteomes" id="UP000002356">
    <property type="component" value="Unplaced"/>
</dbReference>
<dbReference type="GO" id="GO:0005829">
    <property type="term" value="C:cytosol"/>
    <property type="evidence" value="ECO:0007669"/>
    <property type="project" value="UniProtKB-ARBA"/>
</dbReference>
<dbReference type="GO" id="GO:0045095">
    <property type="term" value="C:keratin filament"/>
    <property type="evidence" value="ECO:0007669"/>
    <property type="project" value="InterPro"/>
</dbReference>
<dbReference type="InterPro" id="IPR002494">
    <property type="entry name" value="KAP"/>
</dbReference>
<dbReference type="InterPro" id="IPR052154">
    <property type="entry name" value="KRTAP_type_2-like"/>
</dbReference>
<dbReference type="PANTHER" id="PTHR48425">
    <property type="entry name" value="KERATIN-ASSOCIATED PROTEIN 2-1"/>
    <property type="match status" value="1"/>
</dbReference>
<dbReference type="PANTHER" id="PTHR48425:SF1">
    <property type="entry name" value="KERATIN-ASSOCIATED PROTEIN 2-1"/>
    <property type="match status" value="1"/>
</dbReference>
<dbReference type="Pfam" id="PF01500">
    <property type="entry name" value="Keratin_B2"/>
    <property type="match status" value="2"/>
</dbReference>
<accession>P02441</accession>
<sequence>TGSCCGPTFSSLSCGGGCLQPRYYRDPCCCRPVSCQTVSRPVTFVPRCTRPICEPCRRPVCCDPCSLQEGCCRPITCCPTSCQAVVCRPCCWATTCCQPVSVQCPCCRPTSCQPAPCSRTTCRTFRTSPCC</sequence>
<name>KRA3_SHEEP</name>